<protein>
    <recommendedName>
        <fullName evidence="1">Histidinol dehydrogenase</fullName>
        <shortName evidence="1">HDH</shortName>
        <ecNumber evidence="1">1.1.1.23</ecNumber>
    </recommendedName>
</protein>
<proteinExistence type="inferred from homology"/>
<organism>
    <name type="scientific">Neisseria meningitidis serogroup B (strain ATCC BAA-335 / MC58)</name>
    <dbReference type="NCBI Taxonomy" id="122586"/>
    <lineage>
        <taxon>Bacteria</taxon>
        <taxon>Pseudomonadati</taxon>
        <taxon>Pseudomonadota</taxon>
        <taxon>Betaproteobacteria</taxon>
        <taxon>Neisseriales</taxon>
        <taxon>Neisseriaceae</taxon>
        <taxon>Neisseria</taxon>
    </lineage>
</organism>
<sequence length="429" mass="46324">MKKLNTQSPDFQAGLKALLAFETAQNPETERIVADICADVQKRGDAALIEYTNKFDQTNAKSIDDLILTQADLNAAFERIPNDVQTALQTAARRVESYHQRQKMESWSYTDEDGTLLGQQITPLDRVGIYVPGGKAAYPSSVIMNAMPAHVAGVKEIIMVVPTPKGERNDIVLAAAYVAGVTKVFTVGGAQAVAALAYGTETIPQVDKITGPGNAFVAAAKRRVFGVVGIDMVAGPSEILVIADGTTPADWVAMDLFSQAEHDEIAQAILIGTSQAYLDEVEAAMDRLIETMPRRDIIEASLGNRGAMILAKDLDEACEIANYISPEHLELSVENPQEWAKKIRHAGAIFMGRYTGESLGDYCAGPNHVLPTSRTARFSSPLGTYDFQKRSSLIQVSEQGAQKLGETASVLAHGESLTAHARAAEFRMK</sequence>
<accession>Q9JYH8</accession>
<keyword id="KW-0028">Amino-acid biosynthesis</keyword>
<keyword id="KW-0368">Histidine biosynthesis</keyword>
<keyword id="KW-0479">Metal-binding</keyword>
<keyword id="KW-0520">NAD</keyword>
<keyword id="KW-0560">Oxidoreductase</keyword>
<keyword id="KW-1185">Reference proteome</keyword>
<keyword id="KW-0862">Zinc</keyword>
<dbReference type="EC" id="1.1.1.23" evidence="1"/>
<dbReference type="EMBL" id="AE002098">
    <property type="protein sequence ID" value="AAF41934.1"/>
    <property type="molecule type" value="Genomic_DNA"/>
</dbReference>
<dbReference type="PIR" id="E81067">
    <property type="entry name" value="E81067"/>
</dbReference>
<dbReference type="RefSeq" id="NP_274587.1">
    <property type="nucleotide sequence ID" value="NC_003112.2"/>
</dbReference>
<dbReference type="RefSeq" id="WP_002220532.1">
    <property type="nucleotide sequence ID" value="NC_003112.2"/>
</dbReference>
<dbReference type="SMR" id="Q9JYH8"/>
<dbReference type="FunCoup" id="Q9JYH8">
    <property type="interactions" value="530"/>
</dbReference>
<dbReference type="STRING" id="122586.NMB1581"/>
<dbReference type="PaxDb" id="122586-NMB1581"/>
<dbReference type="KEGG" id="nme:NMB1581"/>
<dbReference type="PATRIC" id="fig|122586.8.peg.2032"/>
<dbReference type="HOGENOM" id="CLU_006732_3_3_4"/>
<dbReference type="InParanoid" id="Q9JYH8"/>
<dbReference type="OrthoDB" id="9805269at2"/>
<dbReference type="UniPathway" id="UPA00031">
    <property type="reaction ID" value="UER00014"/>
</dbReference>
<dbReference type="Proteomes" id="UP000000425">
    <property type="component" value="Chromosome"/>
</dbReference>
<dbReference type="GO" id="GO:0005737">
    <property type="term" value="C:cytoplasm"/>
    <property type="evidence" value="ECO:0000318"/>
    <property type="project" value="GO_Central"/>
</dbReference>
<dbReference type="GO" id="GO:0005829">
    <property type="term" value="C:cytosol"/>
    <property type="evidence" value="ECO:0000318"/>
    <property type="project" value="GO_Central"/>
</dbReference>
<dbReference type="GO" id="GO:0004399">
    <property type="term" value="F:histidinol dehydrogenase activity"/>
    <property type="evidence" value="ECO:0000318"/>
    <property type="project" value="GO_Central"/>
</dbReference>
<dbReference type="GO" id="GO:0051287">
    <property type="term" value="F:NAD binding"/>
    <property type="evidence" value="ECO:0007669"/>
    <property type="project" value="InterPro"/>
</dbReference>
<dbReference type="GO" id="GO:0008270">
    <property type="term" value="F:zinc ion binding"/>
    <property type="evidence" value="ECO:0007669"/>
    <property type="project" value="UniProtKB-UniRule"/>
</dbReference>
<dbReference type="GO" id="GO:0000105">
    <property type="term" value="P:L-histidine biosynthetic process"/>
    <property type="evidence" value="ECO:0000318"/>
    <property type="project" value="GO_Central"/>
</dbReference>
<dbReference type="CDD" id="cd06572">
    <property type="entry name" value="Histidinol_dh"/>
    <property type="match status" value="1"/>
</dbReference>
<dbReference type="FunFam" id="3.40.50.1980:FF:000004">
    <property type="entry name" value="Histidinol dehydrogenase"/>
    <property type="match status" value="1"/>
</dbReference>
<dbReference type="FunFam" id="3.40.50.1980:FF:000010">
    <property type="entry name" value="Histidinol dehydrogenase"/>
    <property type="match status" value="1"/>
</dbReference>
<dbReference type="FunFam" id="1.20.5.1300:FF:000002">
    <property type="entry name" value="Histidinol dehydrogenase, chloroplastic"/>
    <property type="match status" value="1"/>
</dbReference>
<dbReference type="Gene3D" id="1.20.5.1300">
    <property type="match status" value="1"/>
</dbReference>
<dbReference type="Gene3D" id="3.40.50.1980">
    <property type="entry name" value="Nitrogenase molybdenum iron protein domain"/>
    <property type="match status" value="2"/>
</dbReference>
<dbReference type="HAMAP" id="MF_01024">
    <property type="entry name" value="HisD"/>
    <property type="match status" value="1"/>
</dbReference>
<dbReference type="InterPro" id="IPR016161">
    <property type="entry name" value="Ald_DH/histidinol_DH"/>
</dbReference>
<dbReference type="InterPro" id="IPR001692">
    <property type="entry name" value="Histidinol_DH_CS"/>
</dbReference>
<dbReference type="InterPro" id="IPR022695">
    <property type="entry name" value="Histidinol_DH_monofunct"/>
</dbReference>
<dbReference type="InterPro" id="IPR012131">
    <property type="entry name" value="Hstdl_DH"/>
</dbReference>
<dbReference type="NCBIfam" id="TIGR00069">
    <property type="entry name" value="hisD"/>
    <property type="match status" value="1"/>
</dbReference>
<dbReference type="PANTHER" id="PTHR21256:SF2">
    <property type="entry name" value="HISTIDINE BIOSYNTHESIS TRIFUNCTIONAL PROTEIN"/>
    <property type="match status" value="1"/>
</dbReference>
<dbReference type="PANTHER" id="PTHR21256">
    <property type="entry name" value="HISTIDINOL DEHYDROGENASE HDH"/>
    <property type="match status" value="1"/>
</dbReference>
<dbReference type="Pfam" id="PF00815">
    <property type="entry name" value="Histidinol_dh"/>
    <property type="match status" value="1"/>
</dbReference>
<dbReference type="PIRSF" id="PIRSF000099">
    <property type="entry name" value="Histidinol_dh"/>
    <property type="match status" value="1"/>
</dbReference>
<dbReference type="PRINTS" id="PR00083">
    <property type="entry name" value="HOLDHDRGNASE"/>
</dbReference>
<dbReference type="SUPFAM" id="SSF53720">
    <property type="entry name" value="ALDH-like"/>
    <property type="match status" value="1"/>
</dbReference>
<dbReference type="PROSITE" id="PS00611">
    <property type="entry name" value="HISOL_DEHYDROGENASE"/>
    <property type="match status" value="1"/>
</dbReference>
<gene>
    <name evidence="1" type="primary">hisD</name>
    <name type="ordered locus">NMB1581</name>
</gene>
<evidence type="ECO:0000255" key="1">
    <source>
        <dbReference type="HAMAP-Rule" id="MF_01024"/>
    </source>
</evidence>
<feature type="chain" id="PRO_0000135802" description="Histidinol dehydrogenase">
    <location>
        <begin position="1"/>
        <end position="429"/>
    </location>
</feature>
<feature type="active site" description="Proton acceptor" evidence="1">
    <location>
        <position position="327"/>
    </location>
</feature>
<feature type="active site" description="Proton acceptor" evidence="1">
    <location>
        <position position="328"/>
    </location>
</feature>
<feature type="binding site" evidence="1">
    <location>
        <position position="130"/>
    </location>
    <ligand>
        <name>NAD(+)</name>
        <dbReference type="ChEBI" id="CHEBI:57540"/>
    </ligand>
</feature>
<feature type="binding site" evidence="1">
    <location>
        <position position="191"/>
    </location>
    <ligand>
        <name>NAD(+)</name>
        <dbReference type="ChEBI" id="CHEBI:57540"/>
    </ligand>
</feature>
<feature type="binding site" evidence="1">
    <location>
        <position position="214"/>
    </location>
    <ligand>
        <name>NAD(+)</name>
        <dbReference type="ChEBI" id="CHEBI:57540"/>
    </ligand>
</feature>
<feature type="binding site" evidence="1">
    <location>
        <position position="237"/>
    </location>
    <ligand>
        <name>substrate</name>
    </ligand>
</feature>
<feature type="binding site" evidence="1">
    <location>
        <position position="259"/>
    </location>
    <ligand>
        <name>substrate</name>
    </ligand>
</feature>
<feature type="binding site" evidence="1">
    <location>
        <position position="259"/>
    </location>
    <ligand>
        <name>Zn(2+)</name>
        <dbReference type="ChEBI" id="CHEBI:29105"/>
    </ligand>
</feature>
<feature type="binding site" evidence="1">
    <location>
        <position position="262"/>
    </location>
    <ligand>
        <name>substrate</name>
    </ligand>
</feature>
<feature type="binding site" evidence="1">
    <location>
        <position position="262"/>
    </location>
    <ligand>
        <name>Zn(2+)</name>
        <dbReference type="ChEBI" id="CHEBI:29105"/>
    </ligand>
</feature>
<feature type="binding site" evidence="1">
    <location>
        <position position="328"/>
    </location>
    <ligand>
        <name>substrate</name>
    </ligand>
</feature>
<feature type="binding site" evidence="1">
    <location>
        <position position="361"/>
    </location>
    <ligand>
        <name>substrate</name>
    </ligand>
</feature>
<feature type="binding site" evidence="1">
    <location>
        <position position="361"/>
    </location>
    <ligand>
        <name>Zn(2+)</name>
        <dbReference type="ChEBI" id="CHEBI:29105"/>
    </ligand>
</feature>
<feature type="binding site" evidence="1">
    <location>
        <position position="415"/>
    </location>
    <ligand>
        <name>substrate</name>
    </ligand>
</feature>
<feature type="binding site" evidence="1">
    <location>
        <position position="420"/>
    </location>
    <ligand>
        <name>substrate</name>
    </ligand>
</feature>
<feature type="binding site" evidence="1">
    <location>
        <position position="420"/>
    </location>
    <ligand>
        <name>Zn(2+)</name>
        <dbReference type="ChEBI" id="CHEBI:29105"/>
    </ligand>
</feature>
<name>HISX_NEIMB</name>
<comment type="function">
    <text evidence="1">Catalyzes the sequential NAD-dependent oxidations of L-histidinol to L-histidinaldehyde and then to L-histidine.</text>
</comment>
<comment type="catalytic activity">
    <reaction evidence="1">
        <text>L-histidinol + 2 NAD(+) + H2O = L-histidine + 2 NADH + 3 H(+)</text>
        <dbReference type="Rhea" id="RHEA:20641"/>
        <dbReference type="ChEBI" id="CHEBI:15377"/>
        <dbReference type="ChEBI" id="CHEBI:15378"/>
        <dbReference type="ChEBI" id="CHEBI:57540"/>
        <dbReference type="ChEBI" id="CHEBI:57595"/>
        <dbReference type="ChEBI" id="CHEBI:57699"/>
        <dbReference type="ChEBI" id="CHEBI:57945"/>
        <dbReference type="EC" id="1.1.1.23"/>
    </reaction>
</comment>
<comment type="cofactor">
    <cofactor evidence="1">
        <name>Zn(2+)</name>
        <dbReference type="ChEBI" id="CHEBI:29105"/>
    </cofactor>
    <text evidence="1">Binds 1 zinc ion per subunit.</text>
</comment>
<comment type="pathway">
    <text evidence="1">Amino-acid biosynthesis; L-histidine biosynthesis; L-histidine from 5-phospho-alpha-D-ribose 1-diphosphate: step 9/9.</text>
</comment>
<comment type="similarity">
    <text evidence="1">Belongs to the histidinol dehydrogenase family.</text>
</comment>
<reference key="1">
    <citation type="journal article" date="2000" name="Science">
        <title>Complete genome sequence of Neisseria meningitidis serogroup B strain MC58.</title>
        <authorList>
            <person name="Tettelin H."/>
            <person name="Saunders N.J."/>
            <person name="Heidelberg J.F."/>
            <person name="Jeffries A.C."/>
            <person name="Nelson K.E."/>
            <person name="Eisen J.A."/>
            <person name="Ketchum K.A."/>
            <person name="Hood D.W."/>
            <person name="Peden J.F."/>
            <person name="Dodson R.J."/>
            <person name="Nelson W.C."/>
            <person name="Gwinn M.L."/>
            <person name="DeBoy R.T."/>
            <person name="Peterson J.D."/>
            <person name="Hickey E.K."/>
            <person name="Haft D.H."/>
            <person name="Salzberg S.L."/>
            <person name="White O."/>
            <person name="Fleischmann R.D."/>
            <person name="Dougherty B.A."/>
            <person name="Mason T.M."/>
            <person name="Ciecko A."/>
            <person name="Parksey D.S."/>
            <person name="Blair E."/>
            <person name="Cittone H."/>
            <person name="Clark E.B."/>
            <person name="Cotton M.D."/>
            <person name="Utterback T.R."/>
            <person name="Khouri H.M."/>
            <person name="Qin H."/>
            <person name="Vamathevan J.J."/>
            <person name="Gill J."/>
            <person name="Scarlato V."/>
            <person name="Masignani V."/>
            <person name="Pizza M."/>
            <person name="Grandi G."/>
            <person name="Sun L."/>
            <person name="Smith H.O."/>
            <person name="Fraser C.M."/>
            <person name="Moxon E.R."/>
            <person name="Rappuoli R."/>
            <person name="Venter J.C."/>
        </authorList>
    </citation>
    <scope>NUCLEOTIDE SEQUENCE [LARGE SCALE GENOMIC DNA]</scope>
    <source>
        <strain>ATCC BAA-335 / MC58</strain>
    </source>
</reference>